<keyword id="KW-0194">Cyanelle</keyword>
<keyword id="KW-0472">Membrane</keyword>
<keyword id="KW-0602">Photosynthesis</keyword>
<keyword id="KW-0934">Plastid</keyword>
<keyword id="KW-0677">Repeat</keyword>
<keyword id="KW-0793">Thylakoid</keyword>
<keyword id="KW-0802">TPR repeat</keyword>
<comment type="function">
    <text evidence="2">Essential for the assembly of the photosystem I (PSI) complex. May act as a chaperone-like factor to guide the assembly of the PSI subunits.</text>
</comment>
<comment type="subcellular location">
    <subcellularLocation>
        <location evidence="1">Plastid</location>
        <location evidence="1">Cyanelle thylakoid membrane</location>
        <topology evidence="2">Peripheral membrane protein</topology>
    </subcellularLocation>
</comment>
<comment type="similarity">
    <text evidence="2">Belongs to the Ycf3 family.</text>
</comment>
<dbReference type="EMBL" id="U30821">
    <property type="protein sequence ID" value="AAA81185.1"/>
    <property type="molecule type" value="Genomic_DNA"/>
</dbReference>
<dbReference type="PIR" id="T06842">
    <property type="entry name" value="T06842"/>
</dbReference>
<dbReference type="RefSeq" id="NP_043154.1">
    <property type="nucleotide sequence ID" value="NC_001675.1"/>
</dbReference>
<dbReference type="SMR" id="P48191"/>
<dbReference type="GeneID" id="801628"/>
<dbReference type="GO" id="GO:0033115">
    <property type="term" value="C:cyanelle thylakoid membrane"/>
    <property type="evidence" value="ECO:0007669"/>
    <property type="project" value="UniProtKB-SubCell"/>
</dbReference>
<dbReference type="GO" id="GO:0015979">
    <property type="term" value="P:photosynthesis"/>
    <property type="evidence" value="ECO:0007669"/>
    <property type="project" value="UniProtKB-UniRule"/>
</dbReference>
<dbReference type="Gene3D" id="1.25.40.10">
    <property type="entry name" value="Tetratricopeptide repeat domain"/>
    <property type="match status" value="1"/>
</dbReference>
<dbReference type="HAMAP" id="MF_00439">
    <property type="entry name" value="Ycf3"/>
    <property type="match status" value="1"/>
</dbReference>
<dbReference type="InterPro" id="IPR022818">
    <property type="entry name" value="PSI_Ycf3_assembly"/>
</dbReference>
<dbReference type="InterPro" id="IPR011990">
    <property type="entry name" value="TPR-like_helical_dom_sf"/>
</dbReference>
<dbReference type="InterPro" id="IPR019734">
    <property type="entry name" value="TPR_rpt"/>
</dbReference>
<dbReference type="InterPro" id="IPR051685">
    <property type="entry name" value="Ycf3/AcsC/BcsC/TPR_MFPF"/>
</dbReference>
<dbReference type="NCBIfam" id="NF002725">
    <property type="entry name" value="PRK02603.1"/>
    <property type="match status" value="1"/>
</dbReference>
<dbReference type="PANTHER" id="PTHR44943">
    <property type="entry name" value="CELLULOSE SYNTHASE OPERON PROTEIN C"/>
    <property type="match status" value="1"/>
</dbReference>
<dbReference type="PANTHER" id="PTHR44943:SF8">
    <property type="entry name" value="TPR REPEAT-CONTAINING PROTEIN MJ0263"/>
    <property type="match status" value="1"/>
</dbReference>
<dbReference type="Pfam" id="PF13414">
    <property type="entry name" value="TPR_11"/>
    <property type="match status" value="1"/>
</dbReference>
<dbReference type="SMART" id="SM00028">
    <property type="entry name" value="TPR"/>
    <property type="match status" value="3"/>
</dbReference>
<dbReference type="SUPFAM" id="SSF48452">
    <property type="entry name" value="TPR-like"/>
    <property type="match status" value="1"/>
</dbReference>
<dbReference type="PROSITE" id="PS50005">
    <property type="entry name" value="TPR"/>
    <property type="match status" value="3"/>
</dbReference>
<dbReference type="PROSITE" id="PS50293">
    <property type="entry name" value="TPR_REGION"/>
    <property type="match status" value="1"/>
</dbReference>
<proteinExistence type="inferred from homology"/>
<reference key="1">
    <citation type="journal article" date="1995" name="Plant Mol. Biol. Rep.">
        <title>Nucleotide sequence of the cyanelle DNA from Cyanophora paradoxa.</title>
        <authorList>
            <person name="Stirewalt V.L."/>
            <person name="Michalowski C.B."/>
            <person name="Loeffelhardt W."/>
            <person name="Bohnert H.J."/>
            <person name="Bryant D.A."/>
        </authorList>
    </citation>
    <scope>NUCLEOTIDE SEQUENCE [LARGE SCALE GENOMIC DNA]</scope>
    <source>
        <strain>UTEX LB 555 / Pringsheim</strain>
    </source>
</reference>
<reference key="2">
    <citation type="book" date="1997" name="Eukaryotism and symbiosis">
        <title>The complete sequence of the cyanelle genome of Cyanophora paradoxa: the genetic complexity of a primitive plastid.</title>
        <editorList>
            <person name="Schenk H.E.A."/>
            <person name="Herrmann R."/>
            <person name="Jeon K.W."/>
            <person name="Mueller N.E."/>
            <person name="Schwemmler W."/>
        </editorList>
        <authorList>
            <person name="Loeffelhardt W."/>
            <person name="Stirewalt V.L."/>
            <person name="Michalowski C.B."/>
            <person name="Annarella M."/>
            <person name="Farley J.Y."/>
            <person name="Schluchter W.M."/>
            <person name="Chung S."/>
            <person name="Newmann-Spallart C."/>
            <person name="Steiner J.M."/>
            <person name="Jakowitsch J."/>
            <person name="Bohnert H.J."/>
            <person name="Bryant D.A."/>
        </authorList>
    </citation>
    <scope>NUCLEOTIDE SEQUENCE [LARGE SCALE GENOMIC DNA]</scope>
    <source>
        <strain>UTEX LB 555 / Pringsheim</strain>
    </source>
</reference>
<evidence type="ECO:0000250" key="1"/>
<evidence type="ECO:0000255" key="2">
    <source>
        <dbReference type="HAMAP-Rule" id="MF_00439"/>
    </source>
</evidence>
<organism>
    <name type="scientific">Cyanophora paradoxa</name>
    <dbReference type="NCBI Taxonomy" id="2762"/>
    <lineage>
        <taxon>Eukaryota</taxon>
        <taxon>Glaucocystophyceae</taxon>
        <taxon>Cyanophoraceae</taxon>
        <taxon>Cyanophora</taxon>
    </lineage>
</organism>
<gene>
    <name evidence="2" type="primary">ycf3</name>
</gene>
<feature type="chain" id="PRO_0000217801" description="Photosystem I assembly protein Ycf3">
    <location>
        <begin position="1"/>
        <end position="173"/>
    </location>
</feature>
<feature type="repeat" description="TPR 1">
    <location>
        <begin position="35"/>
        <end position="68"/>
    </location>
</feature>
<feature type="repeat" description="TPR 2">
    <location>
        <begin position="72"/>
        <end position="105"/>
    </location>
</feature>
<feature type="repeat" description="TPR 3">
    <location>
        <begin position="120"/>
        <end position="153"/>
    </location>
</feature>
<accession>P48191</accession>
<geneLocation type="cyanelle"/>
<name>YCF3_CYAPA</name>
<protein>
    <recommendedName>
        <fullName evidence="2">Photosystem I assembly protein Ycf3</fullName>
    </recommendedName>
</protein>
<sequence>MPRSQRNDNFIDKTFTVIADLILKILPVSKKTKEAFAYYRDGMSAQSEGAYAEALENYYEALRLEEDPYDKSYTFYNIALIHTSNGDQTKALEYYRQALDLNPKMPQALNNMAVIYHAQGEQAAEQGDMEMAEALFDQAAFYWKQAIRLAPDNYIEAQNWLKTTGRSKLDILI</sequence>